<proteinExistence type="inferred from homology"/>
<name>SPEA_XYLFT</name>
<gene>
    <name evidence="1" type="primary">speA</name>
    <name type="ordered locus">PD_0113</name>
</gene>
<protein>
    <recommendedName>
        <fullName evidence="1">Biosynthetic arginine decarboxylase</fullName>
        <shortName evidence="1">ADC</shortName>
        <ecNumber evidence="1">4.1.1.19</ecNumber>
    </recommendedName>
</protein>
<accession>Q87F25</accession>
<dbReference type="EC" id="4.1.1.19" evidence="1"/>
<dbReference type="EMBL" id="AE009442">
    <property type="protein sequence ID" value="AAO28012.1"/>
    <property type="molecule type" value="Genomic_DNA"/>
</dbReference>
<dbReference type="RefSeq" id="WP_004087585.1">
    <property type="nucleotide sequence ID" value="NC_004556.1"/>
</dbReference>
<dbReference type="SMR" id="Q87F25"/>
<dbReference type="GeneID" id="93903804"/>
<dbReference type="KEGG" id="xft:PD_0113"/>
<dbReference type="HOGENOM" id="CLU_027243_1_0_6"/>
<dbReference type="Proteomes" id="UP000002516">
    <property type="component" value="Chromosome"/>
</dbReference>
<dbReference type="GO" id="GO:0008792">
    <property type="term" value="F:arginine decarboxylase activity"/>
    <property type="evidence" value="ECO:0007669"/>
    <property type="project" value="UniProtKB-UniRule"/>
</dbReference>
<dbReference type="GO" id="GO:0046872">
    <property type="term" value="F:metal ion binding"/>
    <property type="evidence" value="ECO:0007669"/>
    <property type="project" value="UniProtKB-KW"/>
</dbReference>
<dbReference type="GO" id="GO:0006527">
    <property type="term" value="P:arginine catabolic process"/>
    <property type="evidence" value="ECO:0007669"/>
    <property type="project" value="InterPro"/>
</dbReference>
<dbReference type="GO" id="GO:0033388">
    <property type="term" value="P:putrescine biosynthetic process from arginine"/>
    <property type="evidence" value="ECO:0007669"/>
    <property type="project" value="TreeGrafter"/>
</dbReference>
<dbReference type="GO" id="GO:0008295">
    <property type="term" value="P:spermidine biosynthetic process"/>
    <property type="evidence" value="ECO:0007669"/>
    <property type="project" value="UniProtKB-UniRule"/>
</dbReference>
<dbReference type="CDD" id="cd06830">
    <property type="entry name" value="PLPDE_III_ADC"/>
    <property type="match status" value="1"/>
</dbReference>
<dbReference type="FunFam" id="3.20.20.10:FF:000001">
    <property type="entry name" value="Biosynthetic arginine decarboxylase"/>
    <property type="match status" value="1"/>
</dbReference>
<dbReference type="Gene3D" id="1.10.287.3440">
    <property type="match status" value="1"/>
</dbReference>
<dbReference type="Gene3D" id="1.20.58.930">
    <property type="match status" value="1"/>
</dbReference>
<dbReference type="Gene3D" id="3.20.20.10">
    <property type="entry name" value="Alanine racemase"/>
    <property type="match status" value="1"/>
</dbReference>
<dbReference type="Gene3D" id="2.40.37.10">
    <property type="entry name" value="Lyase, Ornithine Decarboxylase, Chain A, domain 1"/>
    <property type="match status" value="1"/>
</dbReference>
<dbReference type="HAMAP" id="MF_01417">
    <property type="entry name" value="SpeA"/>
    <property type="match status" value="1"/>
</dbReference>
<dbReference type="InterPro" id="IPR009006">
    <property type="entry name" value="Ala_racemase/Decarboxylase_C"/>
</dbReference>
<dbReference type="InterPro" id="IPR040634">
    <property type="entry name" value="Arg_decarb_HB"/>
</dbReference>
<dbReference type="InterPro" id="IPR041128">
    <property type="entry name" value="Arg_decarbox_C"/>
</dbReference>
<dbReference type="InterPro" id="IPR002985">
    <property type="entry name" value="Arg_decrbxlase"/>
</dbReference>
<dbReference type="InterPro" id="IPR022657">
    <property type="entry name" value="De-COase2_CS"/>
</dbReference>
<dbReference type="InterPro" id="IPR022644">
    <property type="entry name" value="De-COase2_N"/>
</dbReference>
<dbReference type="InterPro" id="IPR000183">
    <property type="entry name" value="Orn/DAP/Arg_de-COase"/>
</dbReference>
<dbReference type="InterPro" id="IPR029066">
    <property type="entry name" value="PLP-binding_barrel"/>
</dbReference>
<dbReference type="NCBIfam" id="NF003763">
    <property type="entry name" value="PRK05354.1"/>
    <property type="match status" value="1"/>
</dbReference>
<dbReference type="NCBIfam" id="TIGR01273">
    <property type="entry name" value="speA"/>
    <property type="match status" value="1"/>
</dbReference>
<dbReference type="PANTHER" id="PTHR43295">
    <property type="entry name" value="ARGININE DECARBOXYLASE"/>
    <property type="match status" value="1"/>
</dbReference>
<dbReference type="PANTHER" id="PTHR43295:SF9">
    <property type="entry name" value="BIOSYNTHETIC ARGININE DECARBOXYLASE"/>
    <property type="match status" value="1"/>
</dbReference>
<dbReference type="Pfam" id="PF17810">
    <property type="entry name" value="Arg_decarb_HB"/>
    <property type="match status" value="1"/>
</dbReference>
<dbReference type="Pfam" id="PF17944">
    <property type="entry name" value="Arg_decarbox_C"/>
    <property type="match status" value="1"/>
</dbReference>
<dbReference type="Pfam" id="PF02784">
    <property type="entry name" value="Orn_Arg_deC_N"/>
    <property type="match status" value="1"/>
</dbReference>
<dbReference type="PIRSF" id="PIRSF001336">
    <property type="entry name" value="Arg_decrbxlase"/>
    <property type="match status" value="1"/>
</dbReference>
<dbReference type="PRINTS" id="PR01180">
    <property type="entry name" value="ARGDCRBXLASE"/>
</dbReference>
<dbReference type="PRINTS" id="PR01179">
    <property type="entry name" value="ODADCRBXLASE"/>
</dbReference>
<dbReference type="SUPFAM" id="SSF50621">
    <property type="entry name" value="Alanine racemase C-terminal domain-like"/>
    <property type="match status" value="1"/>
</dbReference>
<dbReference type="SUPFAM" id="SSF51419">
    <property type="entry name" value="PLP-binding barrel"/>
    <property type="match status" value="1"/>
</dbReference>
<dbReference type="PROSITE" id="PS00879">
    <property type="entry name" value="ODR_DC_2_2"/>
    <property type="match status" value="1"/>
</dbReference>
<organism>
    <name type="scientific">Xylella fastidiosa (strain Temecula1 / ATCC 700964)</name>
    <dbReference type="NCBI Taxonomy" id="183190"/>
    <lineage>
        <taxon>Bacteria</taxon>
        <taxon>Pseudomonadati</taxon>
        <taxon>Pseudomonadota</taxon>
        <taxon>Gammaproteobacteria</taxon>
        <taxon>Lysobacterales</taxon>
        <taxon>Lysobacteraceae</taxon>
        <taxon>Xylella</taxon>
    </lineage>
</organism>
<comment type="function">
    <text evidence="1">Catalyzes the biosynthesis of agmatine from arginine.</text>
</comment>
<comment type="catalytic activity">
    <reaction evidence="1">
        <text>L-arginine + H(+) = agmatine + CO2</text>
        <dbReference type="Rhea" id="RHEA:17641"/>
        <dbReference type="ChEBI" id="CHEBI:15378"/>
        <dbReference type="ChEBI" id="CHEBI:16526"/>
        <dbReference type="ChEBI" id="CHEBI:32682"/>
        <dbReference type="ChEBI" id="CHEBI:58145"/>
        <dbReference type="EC" id="4.1.1.19"/>
    </reaction>
</comment>
<comment type="cofactor">
    <cofactor evidence="1">
        <name>Mg(2+)</name>
        <dbReference type="ChEBI" id="CHEBI:18420"/>
    </cofactor>
</comment>
<comment type="cofactor">
    <cofactor evidence="1">
        <name>pyridoxal 5'-phosphate</name>
        <dbReference type="ChEBI" id="CHEBI:597326"/>
    </cofactor>
</comment>
<comment type="similarity">
    <text evidence="1">Belongs to the Orn/Lys/Arg decarboxylase class-II family. SpeA subfamily.</text>
</comment>
<evidence type="ECO:0000255" key="1">
    <source>
        <dbReference type="HAMAP-Rule" id="MF_01417"/>
    </source>
</evidence>
<sequence>MTWSQDLAHKTYSIRHWADGYFEVNDAGHMVVMPLGGDGVRISLPEVVDAARAAGAKLPLLLRFPDILGHRLGKLQAAFAQAQSEWEYAGGYTAVYPIKVNQHRGVAGVLASHQGDGFGLEAGSKPELMAVLALSRPGGLIVCNGYKDREYIRLALIGRKLGLKTFIVIEKPSELRMVLEEAKTLDVLPGLGVRVRLASLGAGKWQNSGGDKAKFGLSPRQVLDVWKVLRGTEYADCLNVMHFHMGSQISNVRDIAKGMREATRYFVELSRLGAKITHVDVGGGLGIDYEGTRSRSDCSINYGLQAYASHIVQPLASACEDYDLVPPRIVTECGRAMTAHHAVLIANVTEVEAVPEGRVPGVCDDEPAVVRHMREIYGELDARPAIELFYEAQHFHAEGLAAYTLGQIDLVHRARIDDLFYAISHGVRERLSHEEKSHRPVLDELNERLVDKYFVNFSVFESIPDVWAINQIFPIVPIERLNEVPTRRGVVCDLTCDSDGTVKQYVENESLDSALPLHVLRHGEAYRIGFFLVGAYQEILGDIHNLFGDTDAVEVAVDGRGYRIAQQRCGDTTDVMLDYVGYALDEVRRVYAQRIAAAGMSAAESKALSDMLEAGLTGYPYLSDVPLE</sequence>
<keyword id="KW-0210">Decarboxylase</keyword>
<keyword id="KW-0456">Lyase</keyword>
<keyword id="KW-0460">Magnesium</keyword>
<keyword id="KW-0479">Metal-binding</keyword>
<keyword id="KW-0620">Polyamine biosynthesis</keyword>
<keyword id="KW-0663">Pyridoxal phosphate</keyword>
<keyword id="KW-1185">Reference proteome</keyword>
<keyword id="KW-0745">Spermidine biosynthesis</keyword>
<feature type="chain" id="PRO_0000149990" description="Biosynthetic arginine decarboxylase">
    <location>
        <begin position="1"/>
        <end position="628"/>
    </location>
</feature>
<feature type="binding site" evidence="1">
    <location>
        <begin position="279"/>
        <end position="289"/>
    </location>
    <ligand>
        <name>substrate</name>
    </ligand>
</feature>
<feature type="modified residue" description="N6-(pyridoxal phosphate)lysine" evidence="1">
    <location>
        <position position="99"/>
    </location>
</feature>
<reference key="1">
    <citation type="journal article" date="2003" name="J. Bacteriol.">
        <title>Comparative analyses of the complete genome sequences of Pierce's disease and citrus variegated chlorosis strains of Xylella fastidiosa.</title>
        <authorList>
            <person name="Van Sluys M.A."/>
            <person name="de Oliveira M.C."/>
            <person name="Monteiro-Vitorello C.B."/>
            <person name="Miyaki C.Y."/>
            <person name="Furlan L.R."/>
            <person name="Camargo L.E.A."/>
            <person name="da Silva A.C.R."/>
            <person name="Moon D.H."/>
            <person name="Takita M.A."/>
            <person name="Lemos E.G.M."/>
            <person name="Machado M.A."/>
            <person name="Ferro M.I.T."/>
            <person name="da Silva F.R."/>
            <person name="Goldman M.H.S."/>
            <person name="Goldman G.H."/>
            <person name="Lemos M.V.F."/>
            <person name="El-Dorry H."/>
            <person name="Tsai S.M."/>
            <person name="Carrer H."/>
            <person name="Carraro D.M."/>
            <person name="de Oliveira R.C."/>
            <person name="Nunes L.R."/>
            <person name="Siqueira W.J."/>
            <person name="Coutinho L.L."/>
            <person name="Kimura E.T."/>
            <person name="Ferro E.S."/>
            <person name="Harakava R."/>
            <person name="Kuramae E.E."/>
            <person name="Marino C.L."/>
            <person name="Giglioti E."/>
            <person name="Abreu I.L."/>
            <person name="Alves L.M.C."/>
            <person name="do Amaral A.M."/>
            <person name="Baia G.S."/>
            <person name="Blanco S.R."/>
            <person name="Brito M.S."/>
            <person name="Cannavan F.S."/>
            <person name="Celestino A.V."/>
            <person name="da Cunha A.F."/>
            <person name="Fenille R.C."/>
            <person name="Ferro J.A."/>
            <person name="Formighieri E.F."/>
            <person name="Kishi L.T."/>
            <person name="Leoni S.G."/>
            <person name="Oliveira A.R."/>
            <person name="Rosa V.E. Jr."/>
            <person name="Sassaki F.T."/>
            <person name="Sena J.A.D."/>
            <person name="de Souza A.A."/>
            <person name="Truffi D."/>
            <person name="Tsukumo F."/>
            <person name="Yanai G.M."/>
            <person name="Zaros L.G."/>
            <person name="Civerolo E.L."/>
            <person name="Simpson A.J.G."/>
            <person name="Almeida N.F. Jr."/>
            <person name="Setubal J.C."/>
            <person name="Kitajima J.P."/>
        </authorList>
    </citation>
    <scope>NUCLEOTIDE SEQUENCE [LARGE SCALE GENOMIC DNA]</scope>
    <source>
        <strain>Temecula1 / ATCC 700964</strain>
    </source>
</reference>